<reference key="1">
    <citation type="journal article" date="2005" name="Proc. Natl. Acad. Sci. U.S.A.">
        <title>Whole genome sequence of Staphylococcus saprophyticus reveals the pathogenesis of uncomplicated urinary tract infection.</title>
        <authorList>
            <person name="Kuroda M."/>
            <person name="Yamashita A."/>
            <person name="Hirakawa H."/>
            <person name="Kumano M."/>
            <person name="Morikawa K."/>
            <person name="Higashide M."/>
            <person name="Maruyama A."/>
            <person name="Inose Y."/>
            <person name="Matoba K."/>
            <person name="Toh H."/>
            <person name="Kuhara S."/>
            <person name="Hattori M."/>
            <person name="Ohta T."/>
        </authorList>
    </citation>
    <scope>NUCLEOTIDE SEQUENCE [LARGE SCALE GENOMIC DNA]</scope>
    <source>
        <strain>ATCC 15305 / DSM 20229 / NCIMB 8711 / NCTC 7292 / S-41</strain>
    </source>
</reference>
<comment type="function">
    <text evidence="1">One of several proteins that assist in the late maturation steps of the functional core of the 30S ribosomal subunit. Associates with free 30S ribosomal subunits (but not with 30S subunits that are part of 70S ribosomes or polysomes). Required for efficient processing of 16S rRNA. May interact with the 5'-terminal helix region of 16S rRNA.</text>
</comment>
<comment type="subunit">
    <text evidence="1">Monomer. Binds 30S ribosomal subunits, but not 50S ribosomal subunits or 70S ribosomes.</text>
</comment>
<comment type="subcellular location">
    <subcellularLocation>
        <location evidence="1">Cytoplasm</location>
    </subcellularLocation>
</comment>
<comment type="similarity">
    <text evidence="1">Belongs to the RbfA family.</text>
</comment>
<feature type="chain" id="PRO_1000000224" description="Ribosome-binding factor A">
    <location>
        <begin position="1"/>
        <end position="114"/>
    </location>
</feature>
<gene>
    <name evidence="1" type="primary">rbfA</name>
    <name type="ordered locus">SSP1495</name>
</gene>
<organism>
    <name type="scientific">Staphylococcus saprophyticus subsp. saprophyticus (strain ATCC 15305 / DSM 20229 / NCIMB 8711 / NCTC 7292 / S-41)</name>
    <dbReference type="NCBI Taxonomy" id="342451"/>
    <lineage>
        <taxon>Bacteria</taxon>
        <taxon>Bacillati</taxon>
        <taxon>Bacillota</taxon>
        <taxon>Bacilli</taxon>
        <taxon>Bacillales</taxon>
        <taxon>Staphylococcaceae</taxon>
        <taxon>Staphylococcus</taxon>
    </lineage>
</organism>
<evidence type="ECO:0000255" key="1">
    <source>
        <dbReference type="HAMAP-Rule" id="MF_00003"/>
    </source>
</evidence>
<protein>
    <recommendedName>
        <fullName evidence="1">Ribosome-binding factor A</fullName>
    </recommendedName>
</protein>
<keyword id="KW-0963">Cytoplasm</keyword>
<keyword id="KW-1185">Reference proteome</keyword>
<keyword id="KW-0690">Ribosome biogenesis</keyword>
<name>RBFA_STAS1</name>
<proteinExistence type="inferred from homology"/>
<accession>Q49X58</accession>
<sequence length="114" mass="13194">MNMRAERVGEQMKQEIMDIANNKVKDPRIGFLTITDVQLTNDLSIATVYLTVLGNEKQKADTFKGLEKAKGFIKSELGSRMRLRIIPELNFEYDESIDYGNKIERMIQDLHKKD</sequence>
<dbReference type="EMBL" id="AP008934">
    <property type="protein sequence ID" value="BAE18640.1"/>
    <property type="molecule type" value="Genomic_DNA"/>
</dbReference>
<dbReference type="RefSeq" id="WP_002483451.1">
    <property type="nucleotide sequence ID" value="NZ_MTGA01000034.1"/>
</dbReference>
<dbReference type="SMR" id="Q49X58"/>
<dbReference type="GeneID" id="66867708"/>
<dbReference type="KEGG" id="ssp:SSP1495"/>
<dbReference type="eggNOG" id="COG0858">
    <property type="taxonomic scope" value="Bacteria"/>
</dbReference>
<dbReference type="HOGENOM" id="CLU_089475_6_3_9"/>
<dbReference type="OrthoDB" id="307788at2"/>
<dbReference type="Proteomes" id="UP000006371">
    <property type="component" value="Chromosome"/>
</dbReference>
<dbReference type="GO" id="GO:0005829">
    <property type="term" value="C:cytosol"/>
    <property type="evidence" value="ECO:0007669"/>
    <property type="project" value="TreeGrafter"/>
</dbReference>
<dbReference type="GO" id="GO:0043024">
    <property type="term" value="F:ribosomal small subunit binding"/>
    <property type="evidence" value="ECO:0007669"/>
    <property type="project" value="TreeGrafter"/>
</dbReference>
<dbReference type="GO" id="GO:0030490">
    <property type="term" value="P:maturation of SSU-rRNA"/>
    <property type="evidence" value="ECO:0007669"/>
    <property type="project" value="UniProtKB-UniRule"/>
</dbReference>
<dbReference type="FunFam" id="3.30.300.20:FF:000009">
    <property type="entry name" value="Ribosome-binding factor A"/>
    <property type="match status" value="1"/>
</dbReference>
<dbReference type="Gene3D" id="3.30.300.20">
    <property type="match status" value="1"/>
</dbReference>
<dbReference type="HAMAP" id="MF_00003">
    <property type="entry name" value="RbfA"/>
    <property type="match status" value="1"/>
</dbReference>
<dbReference type="InterPro" id="IPR015946">
    <property type="entry name" value="KH_dom-like_a/b"/>
</dbReference>
<dbReference type="InterPro" id="IPR000238">
    <property type="entry name" value="RbfA"/>
</dbReference>
<dbReference type="InterPro" id="IPR023799">
    <property type="entry name" value="RbfA_dom_sf"/>
</dbReference>
<dbReference type="InterPro" id="IPR020053">
    <property type="entry name" value="Ribosome-bd_factorA_CS"/>
</dbReference>
<dbReference type="NCBIfam" id="TIGR00082">
    <property type="entry name" value="rbfA"/>
    <property type="match status" value="1"/>
</dbReference>
<dbReference type="PANTHER" id="PTHR33515">
    <property type="entry name" value="RIBOSOME-BINDING FACTOR A, CHLOROPLASTIC-RELATED"/>
    <property type="match status" value="1"/>
</dbReference>
<dbReference type="PANTHER" id="PTHR33515:SF1">
    <property type="entry name" value="RIBOSOME-BINDING FACTOR A, CHLOROPLASTIC-RELATED"/>
    <property type="match status" value="1"/>
</dbReference>
<dbReference type="Pfam" id="PF02033">
    <property type="entry name" value="RBFA"/>
    <property type="match status" value="1"/>
</dbReference>
<dbReference type="SUPFAM" id="SSF89919">
    <property type="entry name" value="Ribosome-binding factor A, RbfA"/>
    <property type="match status" value="1"/>
</dbReference>
<dbReference type="PROSITE" id="PS01319">
    <property type="entry name" value="RBFA"/>
    <property type="match status" value="1"/>
</dbReference>